<name>F204A_PONAB</name>
<keyword id="KW-0175">Coiled coil</keyword>
<keyword id="KW-1185">Reference proteome</keyword>
<protein>
    <recommendedName>
        <fullName>Protein FAM204A</fullName>
    </recommendedName>
</protein>
<dbReference type="EMBL" id="CR859556">
    <property type="protein sequence ID" value="CAH91721.1"/>
    <property type="molecule type" value="mRNA"/>
</dbReference>
<dbReference type="RefSeq" id="NP_001126000.1">
    <property type="nucleotide sequence ID" value="NM_001132528.1"/>
</dbReference>
<dbReference type="SMR" id="Q5R939"/>
<dbReference type="FunCoup" id="Q5R939">
    <property type="interactions" value="2077"/>
</dbReference>
<dbReference type="GeneID" id="100172941"/>
<dbReference type="CTD" id="63877"/>
<dbReference type="eggNOG" id="ENOG502S9J9">
    <property type="taxonomic scope" value="Eukaryota"/>
</dbReference>
<dbReference type="InParanoid" id="Q5R939"/>
<dbReference type="OrthoDB" id="2418792at2759"/>
<dbReference type="Proteomes" id="UP000001595">
    <property type="component" value="Unplaced"/>
</dbReference>
<dbReference type="InterPro" id="IPR037690">
    <property type="entry name" value="FAM204A"/>
</dbReference>
<dbReference type="PANTHER" id="PTHR14386">
    <property type="entry name" value="PROTEIN FAM204A"/>
    <property type="match status" value="1"/>
</dbReference>
<dbReference type="PANTHER" id="PTHR14386:SF2">
    <property type="entry name" value="PROTEIN FAM204A"/>
    <property type="match status" value="1"/>
</dbReference>
<feature type="chain" id="PRO_0000089810" description="Protein FAM204A">
    <location>
        <begin position="1"/>
        <end position="233"/>
    </location>
</feature>
<feature type="region of interest" description="Disordered" evidence="2">
    <location>
        <begin position="1"/>
        <end position="126"/>
    </location>
</feature>
<feature type="coiled-coil region" evidence="1">
    <location>
        <begin position="144"/>
        <end position="164"/>
    </location>
</feature>
<feature type="compositionally biased region" description="Acidic residues" evidence="2">
    <location>
        <begin position="13"/>
        <end position="24"/>
    </location>
</feature>
<feature type="compositionally biased region" description="Basic and acidic residues" evidence="2">
    <location>
        <begin position="39"/>
        <end position="58"/>
    </location>
</feature>
<feature type="compositionally biased region" description="Basic residues" evidence="2">
    <location>
        <begin position="97"/>
        <end position="109"/>
    </location>
</feature>
<gene>
    <name type="primary">FAM204A</name>
</gene>
<accession>Q5R939</accession>
<sequence>MRSGLLPPGLNESDAESNSEDEATLENSGLNLQEDKEDESIRKTEIIDFSTDEPKTETESNVNAYEECPSGIPIDMWNKFQELHKKHSEQKSTTSRFRGKRRKRSRKDKLKNEKELHSEPSSNETQWKELTQYFGVNDRFDPPVKRKKVEKSGLEKRIDQAVEEWNIEKAEELSNQLATRELGVKIAKAVACHNFVKAKKEVENSQAARKKKKLAWGFEAKKRWETKSNMGYM</sequence>
<organism>
    <name type="scientific">Pongo abelii</name>
    <name type="common">Sumatran orangutan</name>
    <name type="synonym">Pongo pygmaeus abelii</name>
    <dbReference type="NCBI Taxonomy" id="9601"/>
    <lineage>
        <taxon>Eukaryota</taxon>
        <taxon>Metazoa</taxon>
        <taxon>Chordata</taxon>
        <taxon>Craniata</taxon>
        <taxon>Vertebrata</taxon>
        <taxon>Euteleostomi</taxon>
        <taxon>Mammalia</taxon>
        <taxon>Eutheria</taxon>
        <taxon>Euarchontoglires</taxon>
        <taxon>Primates</taxon>
        <taxon>Haplorrhini</taxon>
        <taxon>Catarrhini</taxon>
        <taxon>Hominidae</taxon>
        <taxon>Pongo</taxon>
    </lineage>
</organism>
<evidence type="ECO:0000255" key="1"/>
<evidence type="ECO:0000256" key="2">
    <source>
        <dbReference type="SAM" id="MobiDB-lite"/>
    </source>
</evidence>
<proteinExistence type="evidence at transcript level"/>
<reference key="1">
    <citation type="submission" date="2004-11" db="EMBL/GenBank/DDBJ databases">
        <authorList>
            <consortium name="The German cDNA consortium"/>
        </authorList>
    </citation>
    <scope>NUCLEOTIDE SEQUENCE [LARGE SCALE MRNA]</scope>
    <source>
        <tissue>Heart</tissue>
    </source>
</reference>